<gene>
    <name evidence="1" type="primary">topA</name>
    <name type="ordered locus">MJ1652</name>
</gene>
<name>TOP1_METJA</name>
<proteinExistence type="inferred from homology"/>
<reference key="1">
    <citation type="journal article" date="1996" name="Science">
        <title>Complete genome sequence of the methanogenic archaeon, Methanococcus jannaschii.</title>
        <authorList>
            <person name="Bult C.J."/>
            <person name="White O."/>
            <person name="Olsen G.J."/>
            <person name="Zhou L."/>
            <person name="Fleischmann R.D."/>
            <person name="Sutton G.G."/>
            <person name="Blake J.A."/>
            <person name="FitzGerald L.M."/>
            <person name="Clayton R.A."/>
            <person name="Gocayne J.D."/>
            <person name="Kerlavage A.R."/>
            <person name="Dougherty B.A."/>
            <person name="Tomb J.-F."/>
            <person name="Adams M.D."/>
            <person name="Reich C.I."/>
            <person name="Overbeek R."/>
            <person name="Kirkness E.F."/>
            <person name="Weinstock K.G."/>
            <person name="Merrick J.M."/>
            <person name="Glodek A."/>
            <person name="Scott J.L."/>
            <person name="Geoghagen N.S.M."/>
            <person name="Weidman J.F."/>
            <person name="Fuhrmann J.L."/>
            <person name="Nguyen D."/>
            <person name="Utterback T.R."/>
            <person name="Kelley J.M."/>
            <person name="Peterson J.D."/>
            <person name="Sadow P.W."/>
            <person name="Hanna M.C."/>
            <person name="Cotton M.D."/>
            <person name="Roberts K.M."/>
            <person name="Hurst M.A."/>
            <person name="Kaine B.P."/>
            <person name="Borodovsky M."/>
            <person name="Klenk H.-P."/>
            <person name="Fraser C.M."/>
            <person name="Smith H.O."/>
            <person name="Woese C.R."/>
            <person name="Venter J.C."/>
        </authorList>
    </citation>
    <scope>NUCLEOTIDE SEQUENCE [LARGE SCALE GENOMIC DNA]</scope>
    <source>
        <strain>ATCC 43067 / DSM 2661 / JAL-1 / JCM 10045 / NBRC 100440</strain>
    </source>
</reference>
<evidence type="ECO:0000255" key="1">
    <source>
        <dbReference type="HAMAP-Rule" id="MF_00952"/>
    </source>
</evidence>
<evidence type="ECO:0000255" key="2">
    <source>
        <dbReference type="PROSITE-ProRule" id="PRU01383"/>
    </source>
</evidence>
<accession>Q59046</accession>
<sequence length="761" mass="87833">MAEIMTALIICEKPSVAKKIANALGKAKKKSIDGVPYYELERDGKKIIVASAVGHLFTLVEKENKEFGFYPVFDIKWVPASVDKGKEYVNKYIKALKKLSKDADEFYIATDWDIEGELIGYHALKYCCGREKAKRMRFSSLTKKEIVRAFENPDEIDYGLVDAGESRHILDWYFGINLSRALMNAIRAVNRWKTMSVGRVQGPALAFLTERELEIKKFIPKPYWVIEALLKDNLKAIHEKEKFWNEKEAKNVYEKIKDEKSAKVVEIKKTKRKLKPLPPFDLGTLQREAYSYFKISPKETQEIAQKLYENALISYPRTSSQKLPKDRKYLEDILNIIKNHPVYGKWAERILKENLKPVEGKKEDPAHPAIHIVDIPKEELSEKEKEIYDLIARRTLAAFWDNAEREYLNVKIDIKGEKFKLSGSRTVKEGWHEIYYFPKFDEIELPPLKKNDIIKVEKITITRKETQPPKRYTVASIIKELEKRGLGTKATRAEIIDKLIKRGYVIDDGSLKVTDLGISVIETLKRFCPEIIDEKMTRDLEEKLEKIQFRKIKKDDVLDEAEKRLRKILEEFKKKEEDIGIYLIKNLDATNKKAKIVGKCPKCGGDLILIRHKKGRFVGCSNYPECDVKYSLPDKGRIKIPNKVCDACKSPILKIGDREICINPECPLKQVEVKEEDRICPKCGAKLILKKGVYGAFYGCSNYPKCKYTEPINKKEVVGKCPKCGGDLVVREGKFGKFVGCSNYPKCRYTEKLKLNEKEEK</sequence>
<protein>
    <recommendedName>
        <fullName evidence="1">DNA topoisomerase 1</fullName>
        <ecNumber evidence="1">5.6.2.1</ecNumber>
    </recommendedName>
    <alternativeName>
        <fullName evidence="1">DNA topoisomerase I</fullName>
    </alternativeName>
    <alternativeName>
        <fullName>Omega-protein</fullName>
    </alternativeName>
    <alternativeName>
        <fullName>Relaxing enzyme</fullName>
    </alternativeName>
    <alternativeName>
        <fullName>Swivelase</fullName>
    </alternativeName>
    <alternativeName>
        <fullName>Untwisting enzyme</fullName>
    </alternativeName>
</protein>
<comment type="function">
    <text evidence="1">Releases the supercoiling and torsional tension of DNA, which is introduced during the DNA replication and transcription, by transiently cleaving and rejoining one strand of the DNA duplex. Introduces a single-strand break via transesterification at a target site in duplex DNA. The scissile phosphodiester is attacked by the catalytic tyrosine of the enzyme, resulting in the formation of a DNA-(5'-phosphotyrosyl)-enzyme intermediate and the expulsion of a 3'-OH DNA strand. The free DNA strand then undergoes passage around the unbroken strand, thus removing DNA supercoils. Finally, in the religation step, the DNA 3'-OH attacks the covalent intermediate to expel the active-site tyrosine and restore the DNA phosphodiester backbone.</text>
</comment>
<comment type="catalytic activity">
    <reaction evidence="1">
        <text>ATP-independent breakage of single-stranded DNA, followed by passage and rejoining.</text>
        <dbReference type="EC" id="5.6.2.1"/>
    </reaction>
</comment>
<comment type="cofactor">
    <cofactor evidence="1">
        <name>Mg(2+)</name>
        <dbReference type="ChEBI" id="CHEBI:18420"/>
    </cofactor>
</comment>
<comment type="subunit">
    <text evidence="1">Monomer.</text>
</comment>
<comment type="similarity">
    <text evidence="1">Belongs to the type IA topoisomerase family.</text>
</comment>
<dbReference type="EC" id="5.6.2.1" evidence="1"/>
<dbReference type="EMBL" id="L77117">
    <property type="protein sequence ID" value="AAB99673.1"/>
    <property type="molecule type" value="Genomic_DNA"/>
</dbReference>
<dbReference type="PIR" id="B64506">
    <property type="entry name" value="B64506"/>
</dbReference>
<dbReference type="SMR" id="Q59046"/>
<dbReference type="FunCoup" id="Q59046">
    <property type="interactions" value="152"/>
</dbReference>
<dbReference type="STRING" id="243232.MJ_1652"/>
<dbReference type="PaxDb" id="243232-MJ_1652"/>
<dbReference type="EnsemblBacteria" id="AAB99673">
    <property type="protein sequence ID" value="AAB99673"/>
    <property type="gene ID" value="MJ_1652"/>
</dbReference>
<dbReference type="KEGG" id="mja:MJ_1652"/>
<dbReference type="eggNOG" id="arCOG01527">
    <property type="taxonomic scope" value="Archaea"/>
</dbReference>
<dbReference type="HOGENOM" id="CLU_002929_5_2_2"/>
<dbReference type="InParanoid" id="Q59046"/>
<dbReference type="PhylomeDB" id="Q59046"/>
<dbReference type="Proteomes" id="UP000000805">
    <property type="component" value="Chromosome"/>
</dbReference>
<dbReference type="GO" id="GO:0005694">
    <property type="term" value="C:chromosome"/>
    <property type="evidence" value="ECO:0007669"/>
    <property type="project" value="InterPro"/>
</dbReference>
<dbReference type="GO" id="GO:0003677">
    <property type="term" value="F:DNA binding"/>
    <property type="evidence" value="ECO:0007669"/>
    <property type="project" value="UniProtKB-KW"/>
</dbReference>
<dbReference type="GO" id="GO:0003917">
    <property type="term" value="F:DNA topoisomerase type I (single strand cut, ATP-independent) activity"/>
    <property type="evidence" value="ECO:0000318"/>
    <property type="project" value="GO_Central"/>
</dbReference>
<dbReference type="GO" id="GO:0008270">
    <property type="term" value="F:zinc ion binding"/>
    <property type="evidence" value="ECO:0007669"/>
    <property type="project" value="UniProtKB-KW"/>
</dbReference>
<dbReference type="GO" id="GO:0006310">
    <property type="term" value="P:DNA recombination"/>
    <property type="evidence" value="ECO:0000318"/>
    <property type="project" value="GO_Central"/>
</dbReference>
<dbReference type="GO" id="GO:0006281">
    <property type="term" value="P:DNA repair"/>
    <property type="evidence" value="ECO:0000318"/>
    <property type="project" value="GO_Central"/>
</dbReference>
<dbReference type="GO" id="GO:0006265">
    <property type="term" value="P:DNA topological change"/>
    <property type="evidence" value="ECO:0000318"/>
    <property type="project" value="GO_Central"/>
</dbReference>
<dbReference type="CDD" id="cd00186">
    <property type="entry name" value="TOP1Ac"/>
    <property type="match status" value="1"/>
</dbReference>
<dbReference type="CDD" id="cd03362">
    <property type="entry name" value="TOPRIM_TopoIA_TopoIII"/>
    <property type="match status" value="1"/>
</dbReference>
<dbReference type="Gene3D" id="3.40.50.140">
    <property type="match status" value="1"/>
</dbReference>
<dbReference type="Gene3D" id="3.30.65.10">
    <property type="entry name" value="Bacterial Topoisomerase I, domain 1"/>
    <property type="match status" value="3"/>
</dbReference>
<dbReference type="Gene3D" id="1.10.460.10">
    <property type="entry name" value="Topoisomerase I, domain 2"/>
    <property type="match status" value="1"/>
</dbReference>
<dbReference type="Gene3D" id="2.70.20.10">
    <property type="entry name" value="Topoisomerase I, domain 3"/>
    <property type="match status" value="1"/>
</dbReference>
<dbReference type="Gene3D" id="1.10.290.10">
    <property type="entry name" value="Topoisomerase I, domain 4"/>
    <property type="match status" value="1"/>
</dbReference>
<dbReference type="HAMAP" id="MF_00952">
    <property type="entry name" value="Topoisom_1_prok"/>
    <property type="match status" value="1"/>
</dbReference>
<dbReference type="InterPro" id="IPR000380">
    <property type="entry name" value="Topo_IA"/>
</dbReference>
<dbReference type="InterPro" id="IPR003601">
    <property type="entry name" value="Topo_IA_2"/>
</dbReference>
<dbReference type="InterPro" id="IPR023406">
    <property type="entry name" value="Topo_IA_AS"/>
</dbReference>
<dbReference type="InterPro" id="IPR013497">
    <property type="entry name" value="Topo_IA_cen"/>
</dbReference>
<dbReference type="InterPro" id="IPR013824">
    <property type="entry name" value="Topo_IA_cen_sub1"/>
</dbReference>
<dbReference type="InterPro" id="IPR013825">
    <property type="entry name" value="Topo_IA_cen_sub2"/>
</dbReference>
<dbReference type="InterPro" id="IPR013826">
    <property type="entry name" value="Topo_IA_cen_sub3"/>
</dbReference>
<dbReference type="InterPro" id="IPR023405">
    <property type="entry name" value="Topo_IA_core_domain"/>
</dbReference>
<dbReference type="InterPro" id="IPR003602">
    <property type="entry name" value="Topo_IA_DNA-bd_dom"/>
</dbReference>
<dbReference type="InterPro" id="IPR013498">
    <property type="entry name" value="Topo_IA_Znf"/>
</dbReference>
<dbReference type="InterPro" id="IPR005739">
    <property type="entry name" value="TopoI_arch"/>
</dbReference>
<dbReference type="InterPro" id="IPR028612">
    <property type="entry name" value="Topoisom_1_IA"/>
</dbReference>
<dbReference type="InterPro" id="IPR006171">
    <property type="entry name" value="TOPRIM_dom"/>
</dbReference>
<dbReference type="InterPro" id="IPR034144">
    <property type="entry name" value="TOPRIM_TopoIII"/>
</dbReference>
<dbReference type="NCBIfam" id="TIGR01057">
    <property type="entry name" value="topA_arch"/>
    <property type="match status" value="1"/>
</dbReference>
<dbReference type="PANTHER" id="PTHR11390:SF26">
    <property type="entry name" value="DNA TOPOISOMERASE 1"/>
    <property type="match status" value="1"/>
</dbReference>
<dbReference type="PANTHER" id="PTHR11390">
    <property type="entry name" value="PROKARYOTIC DNA TOPOISOMERASE"/>
    <property type="match status" value="1"/>
</dbReference>
<dbReference type="Pfam" id="PF01131">
    <property type="entry name" value="Topoisom_bac"/>
    <property type="match status" value="1"/>
</dbReference>
<dbReference type="Pfam" id="PF01751">
    <property type="entry name" value="Toprim"/>
    <property type="match status" value="1"/>
</dbReference>
<dbReference type="Pfam" id="PF01396">
    <property type="entry name" value="Zn_ribbon_Top1"/>
    <property type="match status" value="3"/>
</dbReference>
<dbReference type="PRINTS" id="PR00417">
    <property type="entry name" value="PRTPISMRASEI"/>
</dbReference>
<dbReference type="SMART" id="SM00437">
    <property type="entry name" value="TOP1Ac"/>
    <property type="match status" value="1"/>
</dbReference>
<dbReference type="SMART" id="SM00436">
    <property type="entry name" value="TOP1Bc"/>
    <property type="match status" value="1"/>
</dbReference>
<dbReference type="SMART" id="SM00493">
    <property type="entry name" value="TOPRIM"/>
    <property type="match status" value="1"/>
</dbReference>
<dbReference type="SUPFAM" id="SSF56712">
    <property type="entry name" value="Prokaryotic type I DNA topoisomerase"/>
    <property type="match status" value="1"/>
</dbReference>
<dbReference type="SUPFAM" id="SSF57783">
    <property type="entry name" value="Zinc beta-ribbon"/>
    <property type="match status" value="3"/>
</dbReference>
<dbReference type="PROSITE" id="PS00396">
    <property type="entry name" value="TOPO_IA_1"/>
    <property type="match status" value="1"/>
</dbReference>
<dbReference type="PROSITE" id="PS52039">
    <property type="entry name" value="TOPO_IA_2"/>
    <property type="match status" value="1"/>
</dbReference>
<dbReference type="PROSITE" id="PS50880">
    <property type="entry name" value="TOPRIM"/>
    <property type="match status" value="1"/>
</dbReference>
<organism>
    <name type="scientific">Methanocaldococcus jannaschii (strain ATCC 43067 / DSM 2661 / JAL-1 / JCM 10045 / NBRC 100440)</name>
    <name type="common">Methanococcus jannaschii</name>
    <dbReference type="NCBI Taxonomy" id="243232"/>
    <lineage>
        <taxon>Archaea</taxon>
        <taxon>Methanobacteriati</taxon>
        <taxon>Methanobacteriota</taxon>
        <taxon>Methanomada group</taxon>
        <taxon>Methanococci</taxon>
        <taxon>Methanococcales</taxon>
        <taxon>Methanocaldococcaceae</taxon>
        <taxon>Methanocaldococcus</taxon>
    </lineage>
</organism>
<keyword id="KW-0238">DNA-binding</keyword>
<keyword id="KW-0413">Isomerase</keyword>
<keyword id="KW-0460">Magnesium</keyword>
<keyword id="KW-0479">Metal-binding</keyword>
<keyword id="KW-1185">Reference proteome</keyword>
<keyword id="KW-0677">Repeat</keyword>
<keyword id="KW-0799">Topoisomerase</keyword>
<keyword id="KW-0862">Zinc</keyword>
<keyword id="KW-0863">Zinc-finger</keyword>
<feature type="chain" id="PRO_0000145178" description="DNA topoisomerase 1">
    <location>
        <begin position="1"/>
        <end position="761"/>
    </location>
</feature>
<feature type="domain" description="Toprim" evidence="1">
    <location>
        <begin position="6"/>
        <end position="143"/>
    </location>
</feature>
<feature type="domain" description="Topo IA-type catalytic" evidence="2">
    <location>
        <begin position="157"/>
        <end position="569"/>
    </location>
</feature>
<feature type="zinc finger region" description="C4-type 1">
    <location>
        <begin position="600"/>
        <end position="626"/>
    </location>
</feature>
<feature type="zinc finger region" description="C4-type 2">
    <location>
        <begin position="680"/>
        <end position="706"/>
    </location>
</feature>
<feature type="zinc finger region" description="C4-type 3">
    <location>
        <begin position="721"/>
        <end position="747"/>
    </location>
</feature>
<feature type="region of interest" description="Interaction with DNA" evidence="1">
    <location>
        <begin position="196"/>
        <end position="201"/>
    </location>
</feature>
<feature type="active site" description="O-(5'-phospho-DNA)-tyrosine intermediate" evidence="2">
    <location>
        <position position="315"/>
    </location>
</feature>
<feature type="binding site" evidence="1">
    <location>
        <position position="12"/>
    </location>
    <ligand>
        <name>Mg(2+)</name>
        <dbReference type="ChEBI" id="CHEBI:18420"/>
        <note>catalytic</note>
    </ligand>
</feature>
<feature type="binding site" evidence="1">
    <location>
        <position position="111"/>
    </location>
    <ligand>
        <name>Mg(2+)</name>
        <dbReference type="ChEBI" id="CHEBI:18420"/>
        <note>catalytic</note>
    </ligand>
</feature>
<feature type="site" description="Interaction with DNA" evidence="1">
    <location>
        <position position="55"/>
    </location>
</feature>
<feature type="site" description="Interaction with DNA" evidence="1">
    <location>
        <position position="167"/>
    </location>
</feature>
<feature type="site" description="Interaction with DNA" evidence="1">
    <location>
        <position position="171"/>
    </location>
</feature>
<feature type="site" description="Interaction with DNA" evidence="1">
    <location>
        <position position="317"/>
    </location>
</feature>
<feature type="site" description="Interaction with DNA" evidence="1">
    <location>
        <position position="502"/>
    </location>
</feature>